<proteinExistence type="inferred from homology"/>
<gene>
    <name type="ordered locus">Strop_1320</name>
</gene>
<sequence>MPGMSRHNQSVGAYGERCALRHLITAGLRPVARNWRCPHGEIDIIAWDGPVLAICEVKTRRTDTFGTPTAAVTGTKARRLRLLAARWLAETGTRADEVRFDVLSIRLTGGPPHVEHLKGAF</sequence>
<comment type="similarity">
    <text evidence="1">Belongs to the UPF0102 family.</text>
</comment>
<protein>
    <recommendedName>
        <fullName evidence="1">UPF0102 protein Strop_1320</fullName>
    </recommendedName>
</protein>
<reference key="1">
    <citation type="journal article" date="2007" name="Proc. Natl. Acad. Sci. U.S.A.">
        <title>Genome sequencing reveals complex secondary metabolome in the marine actinomycete Salinispora tropica.</title>
        <authorList>
            <person name="Udwary D.W."/>
            <person name="Zeigler L."/>
            <person name="Asolkar R.N."/>
            <person name="Singan V."/>
            <person name="Lapidus A."/>
            <person name="Fenical W."/>
            <person name="Jensen P.R."/>
            <person name="Moore B.S."/>
        </authorList>
    </citation>
    <scope>NUCLEOTIDE SEQUENCE [LARGE SCALE GENOMIC DNA]</scope>
    <source>
        <strain>ATCC BAA-916 / DSM 44818 / JCM 13857 / NBRC 105044 / CNB-440</strain>
    </source>
</reference>
<dbReference type="EMBL" id="CP000667">
    <property type="protein sequence ID" value="ABP53790.1"/>
    <property type="molecule type" value="Genomic_DNA"/>
</dbReference>
<dbReference type="SMR" id="A4X4J0"/>
<dbReference type="STRING" id="369723.Strop_1320"/>
<dbReference type="KEGG" id="stp:Strop_1320"/>
<dbReference type="eggNOG" id="COG0792">
    <property type="taxonomic scope" value="Bacteria"/>
</dbReference>
<dbReference type="HOGENOM" id="CLU_115353_2_3_11"/>
<dbReference type="Proteomes" id="UP000000235">
    <property type="component" value="Chromosome"/>
</dbReference>
<dbReference type="GO" id="GO:0003676">
    <property type="term" value="F:nucleic acid binding"/>
    <property type="evidence" value="ECO:0007669"/>
    <property type="project" value="InterPro"/>
</dbReference>
<dbReference type="CDD" id="cd20736">
    <property type="entry name" value="PoNe_Nuclease"/>
    <property type="match status" value="1"/>
</dbReference>
<dbReference type="Gene3D" id="3.40.1350.10">
    <property type="match status" value="1"/>
</dbReference>
<dbReference type="HAMAP" id="MF_00048">
    <property type="entry name" value="UPF0102"/>
    <property type="match status" value="1"/>
</dbReference>
<dbReference type="InterPro" id="IPR011335">
    <property type="entry name" value="Restrct_endonuc-II-like"/>
</dbReference>
<dbReference type="InterPro" id="IPR011856">
    <property type="entry name" value="tRNA_endonuc-like_dom_sf"/>
</dbReference>
<dbReference type="InterPro" id="IPR003509">
    <property type="entry name" value="UPF0102_YraN-like"/>
</dbReference>
<dbReference type="NCBIfam" id="NF009150">
    <property type="entry name" value="PRK12497.1-3"/>
    <property type="match status" value="1"/>
</dbReference>
<dbReference type="NCBIfam" id="NF009154">
    <property type="entry name" value="PRK12497.3-3"/>
    <property type="match status" value="1"/>
</dbReference>
<dbReference type="PANTHER" id="PTHR34039">
    <property type="entry name" value="UPF0102 PROTEIN YRAN"/>
    <property type="match status" value="1"/>
</dbReference>
<dbReference type="PANTHER" id="PTHR34039:SF1">
    <property type="entry name" value="UPF0102 PROTEIN YRAN"/>
    <property type="match status" value="1"/>
</dbReference>
<dbReference type="Pfam" id="PF02021">
    <property type="entry name" value="UPF0102"/>
    <property type="match status" value="1"/>
</dbReference>
<dbReference type="SUPFAM" id="SSF52980">
    <property type="entry name" value="Restriction endonuclease-like"/>
    <property type="match status" value="1"/>
</dbReference>
<accession>A4X4J0</accession>
<keyword id="KW-1185">Reference proteome</keyword>
<name>Y1320_SALTO</name>
<evidence type="ECO:0000255" key="1">
    <source>
        <dbReference type="HAMAP-Rule" id="MF_00048"/>
    </source>
</evidence>
<organism>
    <name type="scientific">Salinispora tropica (strain ATCC BAA-916 / DSM 44818 / JCM 13857 / NBRC 105044 / CNB-440)</name>
    <dbReference type="NCBI Taxonomy" id="369723"/>
    <lineage>
        <taxon>Bacteria</taxon>
        <taxon>Bacillati</taxon>
        <taxon>Actinomycetota</taxon>
        <taxon>Actinomycetes</taxon>
        <taxon>Micromonosporales</taxon>
        <taxon>Micromonosporaceae</taxon>
        <taxon>Salinispora</taxon>
    </lineage>
</organism>
<feature type="chain" id="PRO_0000336257" description="UPF0102 protein Strop_1320">
    <location>
        <begin position="1"/>
        <end position="121"/>
    </location>
</feature>